<comment type="function">
    <text evidence="1">Binds 23S rRNA and is also seen to make contacts with the A and possibly P site tRNAs.</text>
</comment>
<comment type="subunit">
    <text evidence="1">Part of the 50S ribosomal subunit.</text>
</comment>
<comment type="similarity">
    <text evidence="1">Belongs to the universal ribosomal protein uL16 family.</text>
</comment>
<accession>A6LEI4</accession>
<protein>
    <recommendedName>
        <fullName evidence="1">Large ribosomal subunit protein uL16</fullName>
    </recommendedName>
    <alternativeName>
        <fullName evidence="3">50S ribosomal protein L16</fullName>
    </alternativeName>
</protein>
<organism>
    <name type="scientific">Parabacteroides distasonis (strain ATCC 8503 / DSM 20701 / CIP 104284 / JCM 5825 / NCTC 11152)</name>
    <dbReference type="NCBI Taxonomy" id="435591"/>
    <lineage>
        <taxon>Bacteria</taxon>
        <taxon>Pseudomonadati</taxon>
        <taxon>Bacteroidota</taxon>
        <taxon>Bacteroidia</taxon>
        <taxon>Bacteroidales</taxon>
        <taxon>Tannerellaceae</taxon>
        <taxon>Parabacteroides</taxon>
    </lineage>
</organism>
<name>RL16_PARD8</name>
<sequence length="144" mass="16413">MLQPKKTKFRRQQKGRMKGEAQRGNQLAFGSFGIKSLENKWITGRQIEAARIAVTRYMQRQGQVWVRIFPDKPITKKPAEVRMGKGKGNPEGFVAPVTPGRLIFEIEGVPFDIAKEALRLAAQKLPVTTKFVVRRDYDMQNQNA</sequence>
<reference key="1">
    <citation type="journal article" date="2007" name="PLoS Biol.">
        <title>Evolution of symbiotic bacteria in the distal human intestine.</title>
        <authorList>
            <person name="Xu J."/>
            <person name="Mahowald M.A."/>
            <person name="Ley R.E."/>
            <person name="Lozupone C.A."/>
            <person name="Hamady M."/>
            <person name="Martens E.C."/>
            <person name="Henrissat B."/>
            <person name="Coutinho P.M."/>
            <person name="Minx P."/>
            <person name="Latreille P."/>
            <person name="Cordum H."/>
            <person name="Van Brunt A."/>
            <person name="Kim K."/>
            <person name="Fulton R.S."/>
            <person name="Fulton L.A."/>
            <person name="Clifton S.W."/>
            <person name="Wilson R.K."/>
            <person name="Knight R.D."/>
            <person name="Gordon J.I."/>
        </authorList>
    </citation>
    <scope>NUCLEOTIDE SEQUENCE [LARGE SCALE GENOMIC DNA]</scope>
    <source>
        <strain>ATCC 8503 / DSM 20701 / CIP 104284 / JCM 5825 / NCTC 11152</strain>
    </source>
</reference>
<keyword id="KW-1185">Reference proteome</keyword>
<keyword id="KW-0687">Ribonucleoprotein</keyword>
<keyword id="KW-0689">Ribosomal protein</keyword>
<keyword id="KW-0694">RNA-binding</keyword>
<keyword id="KW-0699">rRNA-binding</keyword>
<keyword id="KW-0820">tRNA-binding</keyword>
<feature type="chain" id="PRO_1000054668" description="Large ribosomal subunit protein uL16">
    <location>
        <begin position="1"/>
        <end position="144"/>
    </location>
</feature>
<feature type="region of interest" description="Disordered" evidence="2">
    <location>
        <begin position="1"/>
        <end position="22"/>
    </location>
</feature>
<feature type="compositionally biased region" description="Basic residues" evidence="2">
    <location>
        <begin position="1"/>
        <end position="16"/>
    </location>
</feature>
<dbReference type="EMBL" id="CP000140">
    <property type="protein sequence ID" value="ABR44098.1"/>
    <property type="molecule type" value="Genomic_DNA"/>
</dbReference>
<dbReference type="RefSeq" id="WP_005853976.1">
    <property type="nucleotide sequence ID" value="NZ_LR215978.1"/>
</dbReference>
<dbReference type="SMR" id="A6LEI4"/>
<dbReference type="STRING" id="435591.BDI_2373"/>
<dbReference type="PaxDb" id="435591-BDI_2373"/>
<dbReference type="GeneID" id="93522366"/>
<dbReference type="KEGG" id="pdi:BDI_2373"/>
<dbReference type="eggNOG" id="COG0197">
    <property type="taxonomic scope" value="Bacteria"/>
</dbReference>
<dbReference type="HOGENOM" id="CLU_078858_2_1_10"/>
<dbReference type="BioCyc" id="PDIS435591:G1G5A-2438-MONOMER"/>
<dbReference type="Proteomes" id="UP000000566">
    <property type="component" value="Chromosome"/>
</dbReference>
<dbReference type="GO" id="GO:0022625">
    <property type="term" value="C:cytosolic large ribosomal subunit"/>
    <property type="evidence" value="ECO:0007669"/>
    <property type="project" value="TreeGrafter"/>
</dbReference>
<dbReference type="GO" id="GO:0019843">
    <property type="term" value="F:rRNA binding"/>
    <property type="evidence" value="ECO:0007669"/>
    <property type="project" value="UniProtKB-UniRule"/>
</dbReference>
<dbReference type="GO" id="GO:0003735">
    <property type="term" value="F:structural constituent of ribosome"/>
    <property type="evidence" value="ECO:0007669"/>
    <property type="project" value="InterPro"/>
</dbReference>
<dbReference type="GO" id="GO:0000049">
    <property type="term" value="F:tRNA binding"/>
    <property type="evidence" value="ECO:0007669"/>
    <property type="project" value="UniProtKB-KW"/>
</dbReference>
<dbReference type="GO" id="GO:0006412">
    <property type="term" value="P:translation"/>
    <property type="evidence" value="ECO:0007669"/>
    <property type="project" value="UniProtKB-UniRule"/>
</dbReference>
<dbReference type="CDD" id="cd01433">
    <property type="entry name" value="Ribosomal_L16_L10e"/>
    <property type="match status" value="1"/>
</dbReference>
<dbReference type="FunFam" id="3.90.1170.10:FF:000001">
    <property type="entry name" value="50S ribosomal protein L16"/>
    <property type="match status" value="1"/>
</dbReference>
<dbReference type="Gene3D" id="3.90.1170.10">
    <property type="entry name" value="Ribosomal protein L10e/L16"/>
    <property type="match status" value="1"/>
</dbReference>
<dbReference type="HAMAP" id="MF_01342">
    <property type="entry name" value="Ribosomal_uL16"/>
    <property type="match status" value="1"/>
</dbReference>
<dbReference type="InterPro" id="IPR047873">
    <property type="entry name" value="Ribosomal_uL16"/>
</dbReference>
<dbReference type="InterPro" id="IPR000114">
    <property type="entry name" value="Ribosomal_uL16_bact-type"/>
</dbReference>
<dbReference type="InterPro" id="IPR020798">
    <property type="entry name" value="Ribosomal_uL16_CS"/>
</dbReference>
<dbReference type="InterPro" id="IPR016180">
    <property type="entry name" value="Ribosomal_uL16_dom"/>
</dbReference>
<dbReference type="InterPro" id="IPR036920">
    <property type="entry name" value="Ribosomal_uL16_sf"/>
</dbReference>
<dbReference type="NCBIfam" id="TIGR01164">
    <property type="entry name" value="rplP_bact"/>
    <property type="match status" value="1"/>
</dbReference>
<dbReference type="PANTHER" id="PTHR12220">
    <property type="entry name" value="50S/60S RIBOSOMAL PROTEIN L16"/>
    <property type="match status" value="1"/>
</dbReference>
<dbReference type="PANTHER" id="PTHR12220:SF13">
    <property type="entry name" value="LARGE RIBOSOMAL SUBUNIT PROTEIN UL16M"/>
    <property type="match status" value="1"/>
</dbReference>
<dbReference type="Pfam" id="PF00252">
    <property type="entry name" value="Ribosomal_L16"/>
    <property type="match status" value="1"/>
</dbReference>
<dbReference type="PRINTS" id="PR00060">
    <property type="entry name" value="RIBOSOMALL16"/>
</dbReference>
<dbReference type="SUPFAM" id="SSF54686">
    <property type="entry name" value="Ribosomal protein L16p/L10e"/>
    <property type="match status" value="1"/>
</dbReference>
<dbReference type="PROSITE" id="PS00701">
    <property type="entry name" value="RIBOSOMAL_L16_2"/>
    <property type="match status" value="1"/>
</dbReference>
<gene>
    <name evidence="1" type="primary">rplP</name>
    <name type="ordered locus">BDI_2373</name>
</gene>
<evidence type="ECO:0000255" key="1">
    <source>
        <dbReference type="HAMAP-Rule" id="MF_01342"/>
    </source>
</evidence>
<evidence type="ECO:0000256" key="2">
    <source>
        <dbReference type="SAM" id="MobiDB-lite"/>
    </source>
</evidence>
<evidence type="ECO:0000305" key="3"/>
<proteinExistence type="inferred from homology"/>